<gene>
    <name type="primary">queC2</name>
    <name type="ordered locus">STK_23180</name>
</gene>
<evidence type="ECO:0000250" key="1"/>
<evidence type="ECO:0000305" key="2"/>
<feature type="initiator methionine" description="Removed" evidence="1">
    <location>
        <position position="1"/>
    </location>
</feature>
<feature type="chain" id="PRO_0000246992" description="7-cyano-7-deazaguanine synthase 2">
    <location>
        <begin position="2"/>
        <end position="460"/>
    </location>
</feature>
<feature type="domain" description="Glutamine amidotransferase type-2">
    <location>
        <begin position="2"/>
        <end position="225"/>
    </location>
</feature>
<feature type="active site" description="For GATase activity" evidence="1">
    <location>
        <position position="2"/>
    </location>
</feature>
<feature type="binding site" evidence="1">
    <location>
        <begin position="245"/>
        <end position="255"/>
    </location>
    <ligand>
        <name>ATP</name>
        <dbReference type="ChEBI" id="CHEBI:30616"/>
    </ligand>
</feature>
<feature type="binding site" evidence="1">
    <location>
        <position position="426"/>
    </location>
    <ligand>
        <name>Zn(2+)</name>
        <dbReference type="ChEBI" id="CHEBI:29105"/>
    </ligand>
</feature>
<feature type="binding site" evidence="1">
    <location>
        <position position="434"/>
    </location>
    <ligand>
        <name>Zn(2+)</name>
        <dbReference type="ChEBI" id="CHEBI:29105"/>
    </ligand>
</feature>
<feature type="binding site" evidence="1">
    <location>
        <position position="437"/>
    </location>
    <ligand>
        <name>Zn(2+)</name>
        <dbReference type="ChEBI" id="CHEBI:29105"/>
    </ligand>
</feature>
<feature type="binding site" evidence="1">
    <location>
        <position position="440"/>
    </location>
    <ligand>
        <name>Zn(2+)</name>
        <dbReference type="ChEBI" id="CHEBI:29105"/>
    </ligand>
</feature>
<accession>Q96Y49</accession>
<accession>F9VPD6</accession>
<reference key="1">
    <citation type="journal article" date="2001" name="DNA Res.">
        <title>Complete genome sequence of an aerobic thermoacidophilic Crenarchaeon, Sulfolobus tokodaii strain7.</title>
        <authorList>
            <person name="Kawarabayasi Y."/>
            <person name="Hino Y."/>
            <person name="Horikawa H."/>
            <person name="Jin-no K."/>
            <person name="Takahashi M."/>
            <person name="Sekine M."/>
            <person name="Baba S."/>
            <person name="Ankai A."/>
            <person name="Kosugi H."/>
            <person name="Hosoyama A."/>
            <person name="Fukui S."/>
            <person name="Nagai Y."/>
            <person name="Nishijima K."/>
            <person name="Otsuka R."/>
            <person name="Nakazawa H."/>
            <person name="Takamiya M."/>
            <person name="Kato Y."/>
            <person name="Yoshizawa T."/>
            <person name="Tanaka T."/>
            <person name="Kudoh Y."/>
            <person name="Yamazaki J."/>
            <person name="Kushida N."/>
            <person name="Oguchi A."/>
            <person name="Aoki K."/>
            <person name="Masuda S."/>
            <person name="Yanagii M."/>
            <person name="Nishimura M."/>
            <person name="Yamagishi A."/>
            <person name="Oshima T."/>
            <person name="Kikuchi H."/>
        </authorList>
    </citation>
    <scope>NUCLEOTIDE SEQUENCE [LARGE SCALE GENOMIC DNA]</scope>
    <source>
        <strain>DSM 16993 / JCM 10545 / NBRC 100140 / 7</strain>
    </source>
</reference>
<organism>
    <name type="scientific">Sulfurisphaera tokodaii (strain DSM 16993 / JCM 10545 / NBRC 100140 / 7)</name>
    <name type="common">Sulfolobus tokodaii</name>
    <dbReference type="NCBI Taxonomy" id="273063"/>
    <lineage>
        <taxon>Archaea</taxon>
        <taxon>Thermoproteota</taxon>
        <taxon>Thermoprotei</taxon>
        <taxon>Sulfolobales</taxon>
        <taxon>Sulfolobaceae</taxon>
        <taxon>Sulfurisphaera</taxon>
    </lineage>
</organism>
<comment type="function">
    <text evidence="1">Catalyzes the ATP-dependent conversion of 7-carboxy-7-deazaguanine (CDG) to 7-cyano-7-deazaguanine (preQ(0)).</text>
</comment>
<comment type="catalytic activity">
    <reaction>
        <text>7-carboxy-7-deazaguanine + NH4(+) + ATP = 7-cyano-7-deazaguanine + ADP + phosphate + H2O + H(+)</text>
        <dbReference type="Rhea" id="RHEA:27982"/>
        <dbReference type="ChEBI" id="CHEBI:15377"/>
        <dbReference type="ChEBI" id="CHEBI:15378"/>
        <dbReference type="ChEBI" id="CHEBI:28938"/>
        <dbReference type="ChEBI" id="CHEBI:30616"/>
        <dbReference type="ChEBI" id="CHEBI:43474"/>
        <dbReference type="ChEBI" id="CHEBI:45075"/>
        <dbReference type="ChEBI" id="CHEBI:61036"/>
        <dbReference type="ChEBI" id="CHEBI:456216"/>
        <dbReference type="EC" id="6.3.4.20"/>
    </reaction>
</comment>
<comment type="cofactor">
    <cofactor evidence="1">
        <name>Zn(2+)</name>
        <dbReference type="ChEBI" id="CHEBI:29105"/>
    </cofactor>
    <text evidence="1">Binds 1 zinc ion per subunit.</text>
</comment>
<comment type="pathway">
    <text>Purine metabolism; 7-cyano-7-deazaguanine biosynthesis.</text>
</comment>
<comment type="similarity">
    <text evidence="2">Belongs to the QueC family.</text>
</comment>
<protein>
    <recommendedName>
        <fullName>7-cyano-7-deazaguanine synthase 2</fullName>
        <ecNumber>6.3.4.20</ecNumber>
    </recommendedName>
    <alternativeName>
        <fullName>7-cyano-7-carbaguanine synthase 2</fullName>
    </alternativeName>
    <alternativeName>
        <fullName>Archaeosine biosynthesis protein QueC 2</fullName>
    </alternativeName>
    <alternativeName>
        <fullName>PreQ(0) synthase 2</fullName>
    </alternativeName>
</protein>
<proteinExistence type="inferred from homology"/>
<name>QUEC2_SULTO</name>
<sequence>MCSVTGVLIIKPENYEKIEKKLIQILKRAEDRGRDSFGVIVIEKDGSVRKVKALGRPSTQEEKLYGILDENSKVIIANNRAEPTTEYVRQKTEEDIQPFEGERYIVTHNGIIANDLELEKKYNVIRRTKIDSAVVPPILDKYWNGEIEQLKKILNDIKGSFAFIIGDKKRPNRIYIAQNFKPVYMMYDRELGAIFFTSLDDYFDASAFDSVTKLDPYSIVEVNDNLEIRKIQLLDKKIKKVLVIASGGLDSTVAATYLLRQGYEITLLHFNYHHKAEEREREAVKKIAEYLQVPLIEIDTDLFKIIGHTTLLKGGGEIVKDRLGEEGAEFAHEWVPARNLIFYSVALALAEAYGYDAIASGINLEEAGAYPDNEMEFVRLFAKLSPYATGPNKKVEVMMPVGNLVKHEIVKLGVEIGAPLHLTWSCYEGGQKHCGKCGPCYMRKMAFRINGLNDPVEYEN</sequence>
<keyword id="KW-0067">ATP-binding</keyword>
<keyword id="KW-0315">Glutamine amidotransferase</keyword>
<keyword id="KW-0436">Ligase</keyword>
<keyword id="KW-0479">Metal-binding</keyword>
<keyword id="KW-0547">Nucleotide-binding</keyword>
<keyword id="KW-1185">Reference proteome</keyword>
<keyword id="KW-0862">Zinc</keyword>
<dbReference type="EC" id="6.3.4.20"/>
<dbReference type="EMBL" id="BA000023">
    <property type="protein sequence ID" value="BAK54783.1"/>
    <property type="molecule type" value="Genomic_DNA"/>
</dbReference>
<dbReference type="RefSeq" id="WP_010980403.1">
    <property type="nucleotide sequence ID" value="NC_003106.2"/>
</dbReference>
<dbReference type="SMR" id="Q96Y49"/>
<dbReference type="STRING" id="273063.STK_23180"/>
<dbReference type="GeneID" id="1460401"/>
<dbReference type="KEGG" id="sto:STK_23180"/>
<dbReference type="PATRIC" id="fig|273063.9.peg.2622"/>
<dbReference type="eggNOG" id="arCOG00039">
    <property type="taxonomic scope" value="Archaea"/>
</dbReference>
<dbReference type="OrthoDB" id="6532at2157"/>
<dbReference type="UniPathway" id="UPA00391"/>
<dbReference type="Proteomes" id="UP000001015">
    <property type="component" value="Chromosome"/>
</dbReference>
<dbReference type="GO" id="GO:0005524">
    <property type="term" value="F:ATP binding"/>
    <property type="evidence" value="ECO:0007669"/>
    <property type="project" value="UniProtKB-UniRule"/>
</dbReference>
<dbReference type="GO" id="GO:0016879">
    <property type="term" value="F:ligase activity, forming carbon-nitrogen bonds"/>
    <property type="evidence" value="ECO:0007669"/>
    <property type="project" value="UniProtKB-UniRule"/>
</dbReference>
<dbReference type="GO" id="GO:0008270">
    <property type="term" value="F:zinc ion binding"/>
    <property type="evidence" value="ECO:0007669"/>
    <property type="project" value="UniProtKB-UniRule"/>
</dbReference>
<dbReference type="CDD" id="cd00352">
    <property type="entry name" value="Gn_AT_II"/>
    <property type="match status" value="1"/>
</dbReference>
<dbReference type="CDD" id="cd01995">
    <property type="entry name" value="QueC-like"/>
    <property type="match status" value="1"/>
</dbReference>
<dbReference type="Gene3D" id="3.60.20.10">
    <property type="entry name" value="Glutamine Phosphoribosylpyrophosphate, subunit 1, domain 1"/>
    <property type="match status" value="1"/>
</dbReference>
<dbReference type="Gene3D" id="3.40.50.620">
    <property type="entry name" value="HUPs"/>
    <property type="match status" value="1"/>
</dbReference>
<dbReference type="HAMAP" id="MF_01633">
    <property type="entry name" value="QueC"/>
    <property type="match status" value="1"/>
</dbReference>
<dbReference type="InterPro" id="IPR017932">
    <property type="entry name" value="GATase_2_dom"/>
</dbReference>
<dbReference type="InterPro" id="IPR029055">
    <property type="entry name" value="Ntn_hydrolases_N"/>
</dbReference>
<dbReference type="InterPro" id="IPR018317">
    <property type="entry name" value="QueC"/>
</dbReference>
<dbReference type="InterPro" id="IPR014729">
    <property type="entry name" value="Rossmann-like_a/b/a_fold"/>
</dbReference>
<dbReference type="NCBIfam" id="TIGR00364">
    <property type="entry name" value="7-cyano-7-deazaguanine synthase QueC"/>
    <property type="match status" value="1"/>
</dbReference>
<dbReference type="PANTHER" id="PTHR42914">
    <property type="entry name" value="7-CYANO-7-DEAZAGUANINE SYNTHASE"/>
    <property type="match status" value="1"/>
</dbReference>
<dbReference type="PANTHER" id="PTHR42914:SF1">
    <property type="entry name" value="7-CYANO-7-DEAZAGUANINE SYNTHASE"/>
    <property type="match status" value="1"/>
</dbReference>
<dbReference type="Pfam" id="PF13537">
    <property type="entry name" value="GATase_7"/>
    <property type="match status" value="1"/>
</dbReference>
<dbReference type="Pfam" id="PF06508">
    <property type="entry name" value="QueC"/>
    <property type="match status" value="1"/>
</dbReference>
<dbReference type="SUPFAM" id="SSF52402">
    <property type="entry name" value="Adenine nucleotide alpha hydrolases-like"/>
    <property type="match status" value="1"/>
</dbReference>
<dbReference type="SUPFAM" id="SSF56235">
    <property type="entry name" value="N-terminal nucleophile aminohydrolases (Ntn hydrolases)"/>
    <property type="match status" value="1"/>
</dbReference>
<dbReference type="PROSITE" id="PS51278">
    <property type="entry name" value="GATASE_TYPE_2"/>
    <property type="match status" value="1"/>
</dbReference>